<gene>
    <name evidence="1" type="primary">lipA</name>
    <name type="ordered locus">PSPA7_1113</name>
</gene>
<accession>A6V0B4</accession>
<feature type="chain" id="PRO_0000325288" description="Lipoyl synthase">
    <location>
        <begin position="1"/>
        <end position="327"/>
    </location>
</feature>
<feature type="domain" description="Radical SAM core" evidence="2">
    <location>
        <begin position="86"/>
        <end position="303"/>
    </location>
</feature>
<feature type="binding site" evidence="1">
    <location>
        <position position="74"/>
    </location>
    <ligand>
        <name>[4Fe-4S] cluster</name>
        <dbReference type="ChEBI" id="CHEBI:49883"/>
        <label>1</label>
    </ligand>
</feature>
<feature type="binding site" evidence="1">
    <location>
        <position position="79"/>
    </location>
    <ligand>
        <name>[4Fe-4S] cluster</name>
        <dbReference type="ChEBI" id="CHEBI:49883"/>
        <label>1</label>
    </ligand>
</feature>
<feature type="binding site" evidence="1">
    <location>
        <position position="85"/>
    </location>
    <ligand>
        <name>[4Fe-4S] cluster</name>
        <dbReference type="ChEBI" id="CHEBI:49883"/>
        <label>1</label>
    </ligand>
</feature>
<feature type="binding site" evidence="1">
    <location>
        <position position="100"/>
    </location>
    <ligand>
        <name>[4Fe-4S] cluster</name>
        <dbReference type="ChEBI" id="CHEBI:49883"/>
        <label>2</label>
        <note>4Fe-4S-S-AdoMet</note>
    </ligand>
</feature>
<feature type="binding site" evidence="1">
    <location>
        <position position="104"/>
    </location>
    <ligand>
        <name>[4Fe-4S] cluster</name>
        <dbReference type="ChEBI" id="CHEBI:49883"/>
        <label>2</label>
        <note>4Fe-4S-S-AdoMet</note>
    </ligand>
</feature>
<feature type="binding site" evidence="1">
    <location>
        <position position="107"/>
    </location>
    <ligand>
        <name>[4Fe-4S] cluster</name>
        <dbReference type="ChEBI" id="CHEBI:49883"/>
        <label>2</label>
        <note>4Fe-4S-S-AdoMet</note>
    </ligand>
</feature>
<feature type="binding site" evidence="1">
    <location>
        <position position="314"/>
    </location>
    <ligand>
        <name>[4Fe-4S] cluster</name>
        <dbReference type="ChEBI" id="CHEBI:49883"/>
        <label>1</label>
    </ligand>
</feature>
<comment type="function">
    <text evidence="1">Catalyzes the radical-mediated insertion of two sulfur atoms into the C-6 and C-8 positions of the octanoyl moiety bound to the lipoyl domains of lipoate-dependent enzymes, thereby converting the octanoylated domains into lipoylated derivatives.</text>
</comment>
<comment type="catalytic activity">
    <reaction evidence="1">
        <text>[[Fe-S] cluster scaffold protein carrying a second [4Fe-4S](2+) cluster] + N(6)-octanoyl-L-lysyl-[protein] + 2 oxidized [2Fe-2S]-[ferredoxin] + 2 S-adenosyl-L-methionine + 4 H(+) = [[Fe-S] cluster scaffold protein] + N(6)-[(R)-dihydrolipoyl]-L-lysyl-[protein] + 4 Fe(3+) + 2 hydrogen sulfide + 2 5'-deoxyadenosine + 2 L-methionine + 2 reduced [2Fe-2S]-[ferredoxin]</text>
        <dbReference type="Rhea" id="RHEA:16585"/>
        <dbReference type="Rhea" id="RHEA-COMP:9928"/>
        <dbReference type="Rhea" id="RHEA-COMP:10000"/>
        <dbReference type="Rhea" id="RHEA-COMP:10001"/>
        <dbReference type="Rhea" id="RHEA-COMP:10475"/>
        <dbReference type="Rhea" id="RHEA-COMP:14568"/>
        <dbReference type="Rhea" id="RHEA-COMP:14569"/>
        <dbReference type="ChEBI" id="CHEBI:15378"/>
        <dbReference type="ChEBI" id="CHEBI:17319"/>
        <dbReference type="ChEBI" id="CHEBI:29034"/>
        <dbReference type="ChEBI" id="CHEBI:29919"/>
        <dbReference type="ChEBI" id="CHEBI:33722"/>
        <dbReference type="ChEBI" id="CHEBI:33737"/>
        <dbReference type="ChEBI" id="CHEBI:33738"/>
        <dbReference type="ChEBI" id="CHEBI:57844"/>
        <dbReference type="ChEBI" id="CHEBI:59789"/>
        <dbReference type="ChEBI" id="CHEBI:78809"/>
        <dbReference type="ChEBI" id="CHEBI:83100"/>
        <dbReference type="EC" id="2.8.1.8"/>
    </reaction>
</comment>
<comment type="cofactor">
    <cofactor evidence="1">
        <name>[4Fe-4S] cluster</name>
        <dbReference type="ChEBI" id="CHEBI:49883"/>
    </cofactor>
    <text evidence="1">Binds 2 [4Fe-4S] clusters per subunit. One cluster is coordinated with 3 cysteines and an exchangeable S-adenosyl-L-methionine.</text>
</comment>
<comment type="pathway">
    <text evidence="1">Protein modification; protein lipoylation via endogenous pathway; protein N(6)-(lipoyl)lysine from octanoyl-[acyl-carrier-protein]: step 2/2.</text>
</comment>
<comment type="subcellular location">
    <subcellularLocation>
        <location evidence="1">Cytoplasm</location>
    </subcellularLocation>
</comment>
<comment type="similarity">
    <text evidence="1">Belongs to the radical SAM superfamily. Lipoyl synthase family.</text>
</comment>
<comment type="sequence caution" evidence="3">
    <conflict type="erroneous initiation">
        <sequence resource="EMBL-CDS" id="ABR83847"/>
    </conflict>
</comment>
<sequence length="327" mass="36775">MSTVVEKSGEAKPGKVEVGVKLRGAEKVARIPVKIIPTEELPKKPDWIRVRIPVSPEVDRIKQLLRKHKLHSVCEEASCPNLGECFSGGTATFMIMGDICTRRCPFCDVGHGRPKPLDVDEPTNLAIAIADLRLKYVVITSVDRDDLRDGGAQHFADCLREIRKLSPGIQLETLVPDYRGRMDIALEITANEPPDVFNHNLETVPRLYRSSRPGSDFEWSLDLLQKFKQMVPHVPTKSGLMLGLGETDEEVIEVMQRMREHDIDMLTLGQYLQPSRNHLPVQRFVHPDTFAWFAEEGERMGFKNVASGPLVRSSYHADQQAHGNKIG</sequence>
<protein>
    <recommendedName>
        <fullName evidence="1">Lipoyl synthase</fullName>
        <ecNumber evidence="1">2.8.1.8</ecNumber>
    </recommendedName>
    <alternativeName>
        <fullName evidence="1">Lip-syn</fullName>
        <shortName evidence="1">LS</shortName>
    </alternativeName>
    <alternativeName>
        <fullName evidence="1">Lipoate synthase</fullName>
    </alternativeName>
    <alternativeName>
        <fullName evidence="1">Lipoic acid synthase</fullName>
    </alternativeName>
    <alternativeName>
        <fullName evidence="1">Sulfur insertion protein LipA</fullName>
    </alternativeName>
</protein>
<proteinExistence type="inferred from homology"/>
<organism>
    <name type="scientific">Pseudomonas paraeruginosa (strain DSM 24068 / PA7)</name>
    <name type="common">Pseudomonas aeruginosa (strain PA7)</name>
    <dbReference type="NCBI Taxonomy" id="381754"/>
    <lineage>
        <taxon>Bacteria</taxon>
        <taxon>Pseudomonadati</taxon>
        <taxon>Pseudomonadota</taxon>
        <taxon>Gammaproteobacteria</taxon>
        <taxon>Pseudomonadales</taxon>
        <taxon>Pseudomonadaceae</taxon>
        <taxon>Pseudomonas</taxon>
        <taxon>Pseudomonas paraeruginosa</taxon>
    </lineage>
</organism>
<name>LIPA_PSEP7</name>
<reference key="1">
    <citation type="submission" date="2007-06" db="EMBL/GenBank/DDBJ databases">
        <authorList>
            <person name="Dodson R.J."/>
            <person name="Harkins D."/>
            <person name="Paulsen I.T."/>
        </authorList>
    </citation>
    <scope>NUCLEOTIDE SEQUENCE [LARGE SCALE GENOMIC DNA]</scope>
    <source>
        <strain>DSM 24068 / PA7</strain>
    </source>
</reference>
<dbReference type="EC" id="2.8.1.8" evidence="1"/>
<dbReference type="EMBL" id="CP000744">
    <property type="protein sequence ID" value="ABR83847.1"/>
    <property type="status" value="ALT_INIT"/>
    <property type="molecule type" value="Genomic_DNA"/>
</dbReference>
<dbReference type="RefSeq" id="WP_041025292.1">
    <property type="nucleotide sequence ID" value="NC_009656.1"/>
</dbReference>
<dbReference type="SMR" id="A6V0B4"/>
<dbReference type="GeneID" id="77219459"/>
<dbReference type="KEGG" id="pap:PSPA7_1113"/>
<dbReference type="HOGENOM" id="CLU_033144_2_1_6"/>
<dbReference type="UniPathway" id="UPA00538">
    <property type="reaction ID" value="UER00593"/>
</dbReference>
<dbReference type="Proteomes" id="UP000001582">
    <property type="component" value="Chromosome"/>
</dbReference>
<dbReference type="GO" id="GO:0005737">
    <property type="term" value="C:cytoplasm"/>
    <property type="evidence" value="ECO:0007669"/>
    <property type="project" value="UniProtKB-SubCell"/>
</dbReference>
<dbReference type="GO" id="GO:0051539">
    <property type="term" value="F:4 iron, 4 sulfur cluster binding"/>
    <property type="evidence" value="ECO:0007669"/>
    <property type="project" value="UniProtKB-UniRule"/>
</dbReference>
<dbReference type="GO" id="GO:0016992">
    <property type="term" value="F:lipoate synthase activity"/>
    <property type="evidence" value="ECO:0007669"/>
    <property type="project" value="UniProtKB-UniRule"/>
</dbReference>
<dbReference type="GO" id="GO:0046872">
    <property type="term" value="F:metal ion binding"/>
    <property type="evidence" value="ECO:0007669"/>
    <property type="project" value="UniProtKB-KW"/>
</dbReference>
<dbReference type="CDD" id="cd01335">
    <property type="entry name" value="Radical_SAM"/>
    <property type="match status" value="1"/>
</dbReference>
<dbReference type="FunFam" id="3.20.20.70:FF:000023">
    <property type="entry name" value="Lipoyl synthase"/>
    <property type="match status" value="1"/>
</dbReference>
<dbReference type="Gene3D" id="3.20.20.70">
    <property type="entry name" value="Aldolase class I"/>
    <property type="match status" value="1"/>
</dbReference>
<dbReference type="HAMAP" id="MF_00206">
    <property type="entry name" value="Lipoyl_synth"/>
    <property type="match status" value="1"/>
</dbReference>
<dbReference type="InterPro" id="IPR013785">
    <property type="entry name" value="Aldolase_TIM"/>
</dbReference>
<dbReference type="InterPro" id="IPR006638">
    <property type="entry name" value="Elp3/MiaA/NifB-like_rSAM"/>
</dbReference>
<dbReference type="InterPro" id="IPR031691">
    <property type="entry name" value="LIAS_N"/>
</dbReference>
<dbReference type="InterPro" id="IPR003698">
    <property type="entry name" value="Lipoyl_synth"/>
</dbReference>
<dbReference type="InterPro" id="IPR007197">
    <property type="entry name" value="rSAM"/>
</dbReference>
<dbReference type="NCBIfam" id="TIGR00510">
    <property type="entry name" value="lipA"/>
    <property type="match status" value="1"/>
</dbReference>
<dbReference type="NCBIfam" id="NF004019">
    <property type="entry name" value="PRK05481.1"/>
    <property type="match status" value="1"/>
</dbReference>
<dbReference type="NCBIfam" id="NF009544">
    <property type="entry name" value="PRK12928.1"/>
    <property type="match status" value="1"/>
</dbReference>
<dbReference type="PANTHER" id="PTHR10949">
    <property type="entry name" value="LIPOYL SYNTHASE"/>
    <property type="match status" value="1"/>
</dbReference>
<dbReference type="PANTHER" id="PTHR10949:SF0">
    <property type="entry name" value="LIPOYL SYNTHASE, MITOCHONDRIAL"/>
    <property type="match status" value="1"/>
</dbReference>
<dbReference type="Pfam" id="PF16881">
    <property type="entry name" value="LIAS_N"/>
    <property type="match status" value="1"/>
</dbReference>
<dbReference type="Pfam" id="PF04055">
    <property type="entry name" value="Radical_SAM"/>
    <property type="match status" value="1"/>
</dbReference>
<dbReference type="PIRSF" id="PIRSF005963">
    <property type="entry name" value="Lipoyl_synth"/>
    <property type="match status" value="1"/>
</dbReference>
<dbReference type="SFLD" id="SFLDF00271">
    <property type="entry name" value="lipoyl_synthase"/>
    <property type="match status" value="1"/>
</dbReference>
<dbReference type="SFLD" id="SFLDG01058">
    <property type="entry name" value="lipoyl_synthase_like"/>
    <property type="match status" value="1"/>
</dbReference>
<dbReference type="SMART" id="SM00729">
    <property type="entry name" value="Elp3"/>
    <property type="match status" value="1"/>
</dbReference>
<dbReference type="SUPFAM" id="SSF102114">
    <property type="entry name" value="Radical SAM enzymes"/>
    <property type="match status" value="1"/>
</dbReference>
<dbReference type="PROSITE" id="PS51918">
    <property type="entry name" value="RADICAL_SAM"/>
    <property type="match status" value="1"/>
</dbReference>
<evidence type="ECO:0000255" key="1">
    <source>
        <dbReference type="HAMAP-Rule" id="MF_00206"/>
    </source>
</evidence>
<evidence type="ECO:0000255" key="2">
    <source>
        <dbReference type="PROSITE-ProRule" id="PRU01266"/>
    </source>
</evidence>
<evidence type="ECO:0000305" key="3"/>
<keyword id="KW-0004">4Fe-4S</keyword>
<keyword id="KW-0963">Cytoplasm</keyword>
<keyword id="KW-0408">Iron</keyword>
<keyword id="KW-0411">Iron-sulfur</keyword>
<keyword id="KW-0479">Metal-binding</keyword>
<keyword id="KW-0949">S-adenosyl-L-methionine</keyword>
<keyword id="KW-0808">Transferase</keyword>